<reference key="1">
    <citation type="journal article" date="2008" name="Proc. Natl. Acad. Sci. U.S.A.">
        <title>The genome of Cyanothece 51142, a unicellular diazotrophic cyanobacterium important in the marine nitrogen cycle.</title>
        <authorList>
            <person name="Welsh E.A."/>
            <person name="Liberton M."/>
            <person name="Stoeckel J."/>
            <person name="Loh T."/>
            <person name="Elvitigala T."/>
            <person name="Wang C."/>
            <person name="Wollam A."/>
            <person name="Fulton R.S."/>
            <person name="Clifton S.W."/>
            <person name="Jacobs J.M."/>
            <person name="Aurora R."/>
            <person name="Ghosh B.K."/>
            <person name="Sherman L.A."/>
            <person name="Smith R.D."/>
            <person name="Wilson R.K."/>
            <person name="Pakrasi H.B."/>
        </authorList>
    </citation>
    <scope>NUCLEOTIDE SEQUENCE [LARGE SCALE GENOMIC DNA]</scope>
    <source>
        <strain>ATCC 51142 / BH68</strain>
    </source>
</reference>
<accession>B1WQY4</accession>
<evidence type="ECO:0000250" key="1"/>
<evidence type="ECO:0000255" key="2">
    <source>
        <dbReference type="HAMAP-Rule" id="MF_00118"/>
    </source>
</evidence>
<sequence length="409" mass="44737">MARAKFERTKPHVNIGTIGHVDHGKTTLTAAITMTLAAAGSAKARKYEDIDAAPEEKARGITINTAHVEYETPNRHYAHVDCPGHADYVKNMITGAAQMDGAILVVSAADGPMPQTREHILLAKQVGVPSLVVFLNKKDQVDDEELLELVELEVRELLSEYDFPGDDIPIISGSALMAVNALIDNPNIKPGENEWTDQVLELMKAVDDNIPEPEREIDKPFLMAVEDVFSISGRGTVATGRIERGKVKVGETIEIVGIRDTRSTTVTGVEMFQKTLDEGMAGDNVGLLLRGIKKEDIERGMVIAKPGSITPHTQFEGEVYVLTKEEGGRHTPFFKNYRPQFYVRTTDVTGTIQDYTADDGSAVEMVMPGDRIKMTVELISPIAIEQGMRFAIREGGRTIGAGVVSKILK</sequence>
<name>EFTU_CROS5</name>
<dbReference type="EC" id="3.6.5.3" evidence="2"/>
<dbReference type="EMBL" id="CP000806">
    <property type="protein sequence ID" value="ACB53436.1"/>
    <property type="molecule type" value="Genomic_DNA"/>
</dbReference>
<dbReference type="RefSeq" id="WP_009543830.1">
    <property type="nucleotide sequence ID" value="NC_010546.1"/>
</dbReference>
<dbReference type="SMR" id="B1WQY4"/>
<dbReference type="STRING" id="43989.cce_4088"/>
<dbReference type="KEGG" id="cyt:cce_4088"/>
<dbReference type="eggNOG" id="COG0050">
    <property type="taxonomic scope" value="Bacteria"/>
</dbReference>
<dbReference type="HOGENOM" id="CLU_007265_0_1_3"/>
<dbReference type="OrthoDB" id="9804504at2"/>
<dbReference type="Proteomes" id="UP000001203">
    <property type="component" value="Chromosome circular"/>
</dbReference>
<dbReference type="GO" id="GO:0005829">
    <property type="term" value="C:cytosol"/>
    <property type="evidence" value="ECO:0007669"/>
    <property type="project" value="TreeGrafter"/>
</dbReference>
<dbReference type="GO" id="GO:0005525">
    <property type="term" value="F:GTP binding"/>
    <property type="evidence" value="ECO:0007669"/>
    <property type="project" value="UniProtKB-UniRule"/>
</dbReference>
<dbReference type="GO" id="GO:0003924">
    <property type="term" value="F:GTPase activity"/>
    <property type="evidence" value="ECO:0007669"/>
    <property type="project" value="InterPro"/>
</dbReference>
<dbReference type="GO" id="GO:0003746">
    <property type="term" value="F:translation elongation factor activity"/>
    <property type="evidence" value="ECO:0007669"/>
    <property type="project" value="UniProtKB-UniRule"/>
</dbReference>
<dbReference type="CDD" id="cd01884">
    <property type="entry name" value="EF_Tu"/>
    <property type="match status" value="1"/>
</dbReference>
<dbReference type="CDD" id="cd03697">
    <property type="entry name" value="EFTU_II"/>
    <property type="match status" value="1"/>
</dbReference>
<dbReference type="CDD" id="cd03707">
    <property type="entry name" value="EFTU_III"/>
    <property type="match status" value="1"/>
</dbReference>
<dbReference type="FunFam" id="2.40.30.10:FF:000001">
    <property type="entry name" value="Elongation factor Tu"/>
    <property type="match status" value="1"/>
</dbReference>
<dbReference type="FunFam" id="2.40.30.10:FF:000046">
    <property type="entry name" value="Elongation factor Tu"/>
    <property type="match status" value="1"/>
</dbReference>
<dbReference type="FunFam" id="3.40.50.300:FF:000003">
    <property type="entry name" value="Elongation factor Tu"/>
    <property type="match status" value="1"/>
</dbReference>
<dbReference type="Gene3D" id="3.40.50.300">
    <property type="entry name" value="P-loop containing nucleotide triphosphate hydrolases"/>
    <property type="match status" value="1"/>
</dbReference>
<dbReference type="Gene3D" id="2.40.30.10">
    <property type="entry name" value="Translation factors"/>
    <property type="match status" value="2"/>
</dbReference>
<dbReference type="HAMAP" id="MF_00118_B">
    <property type="entry name" value="EF_Tu_B"/>
    <property type="match status" value="1"/>
</dbReference>
<dbReference type="InterPro" id="IPR041709">
    <property type="entry name" value="EF-Tu_GTP-bd"/>
</dbReference>
<dbReference type="InterPro" id="IPR050055">
    <property type="entry name" value="EF-Tu_GTPase"/>
</dbReference>
<dbReference type="InterPro" id="IPR004161">
    <property type="entry name" value="EFTu-like_2"/>
</dbReference>
<dbReference type="InterPro" id="IPR033720">
    <property type="entry name" value="EFTU_2"/>
</dbReference>
<dbReference type="InterPro" id="IPR031157">
    <property type="entry name" value="G_TR_CS"/>
</dbReference>
<dbReference type="InterPro" id="IPR027417">
    <property type="entry name" value="P-loop_NTPase"/>
</dbReference>
<dbReference type="InterPro" id="IPR005225">
    <property type="entry name" value="Small_GTP-bd"/>
</dbReference>
<dbReference type="InterPro" id="IPR000795">
    <property type="entry name" value="T_Tr_GTP-bd_dom"/>
</dbReference>
<dbReference type="InterPro" id="IPR009000">
    <property type="entry name" value="Transl_B-barrel_sf"/>
</dbReference>
<dbReference type="InterPro" id="IPR009001">
    <property type="entry name" value="Transl_elong_EF1A/Init_IF2_C"/>
</dbReference>
<dbReference type="InterPro" id="IPR004541">
    <property type="entry name" value="Transl_elong_EFTu/EF1A_bac/org"/>
</dbReference>
<dbReference type="InterPro" id="IPR004160">
    <property type="entry name" value="Transl_elong_EFTu/EF1A_C"/>
</dbReference>
<dbReference type="NCBIfam" id="TIGR00485">
    <property type="entry name" value="EF-Tu"/>
    <property type="match status" value="1"/>
</dbReference>
<dbReference type="NCBIfam" id="NF000766">
    <property type="entry name" value="PRK00049.1"/>
    <property type="match status" value="1"/>
</dbReference>
<dbReference type="NCBIfam" id="NF009372">
    <property type="entry name" value="PRK12735.1"/>
    <property type="match status" value="1"/>
</dbReference>
<dbReference type="NCBIfam" id="NF009373">
    <property type="entry name" value="PRK12736.1"/>
    <property type="match status" value="1"/>
</dbReference>
<dbReference type="NCBIfam" id="TIGR00231">
    <property type="entry name" value="small_GTP"/>
    <property type="match status" value="1"/>
</dbReference>
<dbReference type="PANTHER" id="PTHR43721:SF22">
    <property type="entry name" value="ELONGATION FACTOR TU, MITOCHONDRIAL"/>
    <property type="match status" value="1"/>
</dbReference>
<dbReference type="PANTHER" id="PTHR43721">
    <property type="entry name" value="ELONGATION FACTOR TU-RELATED"/>
    <property type="match status" value="1"/>
</dbReference>
<dbReference type="Pfam" id="PF00009">
    <property type="entry name" value="GTP_EFTU"/>
    <property type="match status" value="1"/>
</dbReference>
<dbReference type="Pfam" id="PF03144">
    <property type="entry name" value="GTP_EFTU_D2"/>
    <property type="match status" value="1"/>
</dbReference>
<dbReference type="Pfam" id="PF03143">
    <property type="entry name" value="GTP_EFTU_D3"/>
    <property type="match status" value="1"/>
</dbReference>
<dbReference type="PRINTS" id="PR00315">
    <property type="entry name" value="ELONGATNFCT"/>
</dbReference>
<dbReference type="SUPFAM" id="SSF50465">
    <property type="entry name" value="EF-Tu/eEF-1alpha/eIF2-gamma C-terminal domain"/>
    <property type="match status" value="1"/>
</dbReference>
<dbReference type="SUPFAM" id="SSF52540">
    <property type="entry name" value="P-loop containing nucleoside triphosphate hydrolases"/>
    <property type="match status" value="1"/>
</dbReference>
<dbReference type="SUPFAM" id="SSF50447">
    <property type="entry name" value="Translation proteins"/>
    <property type="match status" value="1"/>
</dbReference>
<dbReference type="PROSITE" id="PS00301">
    <property type="entry name" value="G_TR_1"/>
    <property type="match status" value="1"/>
</dbReference>
<dbReference type="PROSITE" id="PS51722">
    <property type="entry name" value="G_TR_2"/>
    <property type="match status" value="1"/>
</dbReference>
<gene>
    <name evidence="2" type="primary">tuf</name>
    <name type="ordered locus">cce_4088</name>
</gene>
<keyword id="KW-0963">Cytoplasm</keyword>
<keyword id="KW-0251">Elongation factor</keyword>
<keyword id="KW-0342">GTP-binding</keyword>
<keyword id="KW-0378">Hydrolase</keyword>
<keyword id="KW-0460">Magnesium</keyword>
<keyword id="KW-0479">Metal-binding</keyword>
<keyword id="KW-0547">Nucleotide-binding</keyword>
<keyword id="KW-0648">Protein biosynthesis</keyword>
<keyword id="KW-1185">Reference proteome</keyword>
<comment type="function">
    <text evidence="2">GTP hydrolase that promotes the GTP-dependent binding of aminoacyl-tRNA to the A-site of ribosomes during protein biosynthesis.</text>
</comment>
<comment type="catalytic activity">
    <reaction evidence="2">
        <text>GTP + H2O = GDP + phosphate + H(+)</text>
        <dbReference type="Rhea" id="RHEA:19669"/>
        <dbReference type="ChEBI" id="CHEBI:15377"/>
        <dbReference type="ChEBI" id="CHEBI:15378"/>
        <dbReference type="ChEBI" id="CHEBI:37565"/>
        <dbReference type="ChEBI" id="CHEBI:43474"/>
        <dbReference type="ChEBI" id="CHEBI:58189"/>
        <dbReference type="EC" id="3.6.5.3"/>
    </reaction>
    <physiologicalReaction direction="left-to-right" evidence="2">
        <dbReference type="Rhea" id="RHEA:19670"/>
    </physiologicalReaction>
</comment>
<comment type="subunit">
    <text evidence="2">Monomer.</text>
</comment>
<comment type="subcellular location">
    <subcellularLocation>
        <location evidence="2">Cytoplasm</location>
    </subcellularLocation>
</comment>
<comment type="similarity">
    <text evidence="2">Belongs to the TRAFAC class translation factor GTPase superfamily. Classic translation factor GTPase family. EF-Tu/EF-1A subfamily.</text>
</comment>
<proteinExistence type="inferred from homology"/>
<protein>
    <recommendedName>
        <fullName evidence="2">Elongation factor Tu</fullName>
        <shortName evidence="2">EF-Tu</shortName>
        <ecNumber evidence="2">3.6.5.3</ecNumber>
    </recommendedName>
</protein>
<organism>
    <name type="scientific">Crocosphaera subtropica (strain ATCC 51142 / BH68)</name>
    <name type="common">Cyanothece sp. (strain ATCC 51142)</name>
    <dbReference type="NCBI Taxonomy" id="43989"/>
    <lineage>
        <taxon>Bacteria</taxon>
        <taxon>Bacillati</taxon>
        <taxon>Cyanobacteriota</taxon>
        <taxon>Cyanophyceae</taxon>
        <taxon>Oscillatoriophycideae</taxon>
        <taxon>Chroococcales</taxon>
        <taxon>Aphanothecaceae</taxon>
        <taxon>Crocosphaera</taxon>
        <taxon>Crocosphaera subtropica</taxon>
    </lineage>
</organism>
<feature type="chain" id="PRO_1000095060" description="Elongation factor Tu">
    <location>
        <begin position="1"/>
        <end position="409"/>
    </location>
</feature>
<feature type="domain" description="tr-type G">
    <location>
        <begin position="10"/>
        <end position="214"/>
    </location>
</feature>
<feature type="region of interest" description="G1" evidence="1">
    <location>
        <begin position="19"/>
        <end position="26"/>
    </location>
</feature>
<feature type="region of interest" description="G2" evidence="1">
    <location>
        <begin position="60"/>
        <end position="64"/>
    </location>
</feature>
<feature type="region of interest" description="G3" evidence="1">
    <location>
        <begin position="81"/>
        <end position="84"/>
    </location>
</feature>
<feature type="region of interest" description="G4" evidence="1">
    <location>
        <begin position="136"/>
        <end position="139"/>
    </location>
</feature>
<feature type="region of interest" description="G5" evidence="1">
    <location>
        <begin position="174"/>
        <end position="176"/>
    </location>
</feature>
<feature type="binding site" evidence="2">
    <location>
        <begin position="19"/>
        <end position="26"/>
    </location>
    <ligand>
        <name>GTP</name>
        <dbReference type="ChEBI" id="CHEBI:37565"/>
    </ligand>
</feature>
<feature type="binding site" evidence="2">
    <location>
        <position position="26"/>
    </location>
    <ligand>
        <name>Mg(2+)</name>
        <dbReference type="ChEBI" id="CHEBI:18420"/>
    </ligand>
</feature>
<feature type="binding site" evidence="2">
    <location>
        <begin position="81"/>
        <end position="85"/>
    </location>
    <ligand>
        <name>GTP</name>
        <dbReference type="ChEBI" id="CHEBI:37565"/>
    </ligand>
</feature>
<feature type="binding site" evidence="2">
    <location>
        <begin position="136"/>
        <end position="139"/>
    </location>
    <ligand>
        <name>GTP</name>
        <dbReference type="ChEBI" id="CHEBI:37565"/>
    </ligand>
</feature>